<accession>C5BWR3</accession>
<comment type="function">
    <text evidence="1">One of the primary rRNA binding proteins, it binds directly to 16S rRNA where it helps nucleate assembly of the platform of the 30S subunit by binding and bridging several RNA helices of the 16S rRNA.</text>
</comment>
<comment type="function">
    <text evidence="1">Forms an intersubunit bridge (bridge B4) with the 23S rRNA of the 50S subunit in the ribosome.</text>
</comment>
<comment type="subunit">
    <text evidence="1">Part of the 30S ribosomal subunit. Forms a bridge to the 50S subunit in the 70S ribosome, contacting the 23S rRNA.</text>
</comment>
<comment type="similarity">
    <text evidence="1">Belongs to the universal ribosomal protein uS15 family.</text>
</comment>
<proteinExistence type="inferred from homology"/>
<keyword id="KW-1185">Reference proteome</keyword>
<keyword id="KW-0687">Ribonucleoprotein</keyword>
<keyword id="KW-0689">Ribosomal protein</keyword>
<keyword id="KW-0694">RNA-binding</keyword>
<keyword id="KW-0699">rRNA-binding</keyword>
<evidence type="ECO:0000255" key="1">
    <source>
        <dbReference type="HAMAP-Rule" id="MF_01343"/>
    </source>
</evidence>
<evidence type="ECO:0000305" key="2"/>
<sequence length="89" mass="10325">MALDAAVKQTIITEYATHEGDTGSPEVQIAMLSQRIKDLTEHLKTHKHDHHSRRGLMLLVGQRRRLLGYLQKVDVNRYRALIERLGLRR</sequence>
<dbReference type="EMBL" id="CP001618">
    <property type="protein sequence ID" value="ACQ80729.1"/>
    <property type="molecule type" value="Genomic_DNA"/>
</dbReference>
<dbReference type="RefSeq" id="WP_015882969.1">
    <property type="nucleotide sequence ID" value="NC_012669.1"/>
</dbReference>
<dbReference type="SMR" id="C5BWR3"/>
<dbReference type="STRING" id="471853.Bcav_2479"/>
<dbReference type="KEGG" id="bcv:Bcav_2479"/>
<dbReference type="eggNOG" id="COG0184">
    <property type="taxonomic scope" value="Bacteria"/>
</dbReference>
<dbReference type="HOGENOM" id="CLU_148518_0_0_11"/>
<dbReference type="OrthoDB" id="9799262at2"/>
<dbReference type="Proteomes" id="UP000007962">
    <property type="component" value="Chromosome"/>
</dbReference>
<dbReference type="GO" id="GO:0022627">
    <property type="term" value="C:cytosolic small ribosomal subunit"/>
    <property type="evidence" value="ECO:0007669"/>
    <property type="project" value="TreeGrafter"/>
</dbReference>
<dbReference type="GO" id="GO:0019843">
    <property type="term" value="F:rRNA binding"/>
    <property type="evidence" value="ECO:0007669"/>
    <property type="project" value="UniProtKB-UniRule"/>
</dbReference>
<dbReference type="GO" id="GO:0003735">
    <property type="term" value="F:structural constituent of ribosome"/>
    <property type="evidence" value="ECO:0007669"/>
    <property type="project" value="InterPro"/>
</dbReference>
<dbReference type="GO" id="GO:0006412">
    <property type="term" value="P:translation"/>
    <property type="evidence" value="ECO:0007669"/>
    <property type="project" value="UniProtKB-UniRule"/>
</dbReference>
<dbReference type="CDD" id="cd00353">
    <property type="entry name" value="Ribosomal_S15p_S13e"/>
    <property type="match status" value="1"/>
</dbReference>
<dbReference type="FunFam" id="1.10.287.10:FF:000002">
    <property type="entry name" value="30S ribosomal protein S15"/>
    <property type="match status" value="1"/>
</dbReference>
<dbReference type="Gene3D" id="6.10.250.3130">
    <property type="match status" value="1"/>
</dbReference>
<dbReference type="Gene3D" id="1.10.287.10">
    <property type="entry name" value="S15/NS1, RNA-binding"/>
    <property type="match status" value="1"/>
</dbReference>
<dbReference type="HAMAP" id="MF_01343_B">
    <property type="entry name" value="Ribosomal_uS15_B"/>
    <property type="match status" value="1"/>
</dbReference>
<dbReference type="InterPro" id="IPR000589">
    <property type="entry name" value="Ribosomal_uS15"/>
</dbReference>
<dbReference type="InterPro" id="IPR005290">
    <property type="entry name" value="Ribosomal_uS15_bac-type"/>
</dbReference>
<dbReference type="InterPro" id="IPR009068">
    <property type="entry name" value="uS15_NS1_RNA-bd_sf"/>
</dbReference>
<dbReference type="NCBIfam" id="TIGR00952">
    <property type="entry name" value="S15_bact"/>
    <property type="match status" value="1"/>
</dbReference>
<dbReference type="PANTHER" id="PTHR23321">
    <property type="entry name" value="RIBOSOMAL PROTEIN S15, BACTERIAL AND ORGANELLAR"/>
    <property type="match status" value="1"/>
</dbReference>
<dbReference type="PANTHER" id="PTHR23321:SF26">
    <property type="entry name" value="SMALL RIBOSOMAL SUBUNIT PROTEIN US15M"/>
    <property type="match status" value="1"/>
</dbReference>
<dbReference type="Pfam" id="PF00312">
    <property type="entry name" value="Ribosomal_S15"/>
    <property type="match status" value="1"/>
</dbReference>
<dbReference type="SMART" id="SM01387">
    <property type="entry name" value="Ribosomal_S15"/>
    <property type="match status" value="1"/>
</dbReference>
<dbReference type="SUPFAM" id="SSF47060">
    <property type="entry name" value="S15/NS1 RNA-binding domain"/>
    <property type="match status" value="1"/>
</dbReference>
<dbReference type="PROSITE" id="PS00362">
    <property type="entry name" value="RIBOSOMAL_S15"/>
    <property type="match status" value="1"/>
</dbReference>
<feature type="chain" id="PRO_1000214750" description="Small ribosomal subunit protein uS15">
    <location>
        <begin position="1"/>
        <end position="89"/>
    </location>
</feature>
<reference key="1">
    <citation type="journal article" date="2009" name="Stand. Genomic Sci.">
        <title>Complete genome sequence of Beutenbergia cavernae type strain (HKI 0122).</title>
        <authorList>
            <person name="Land M."/>
            <person name="Pukall R."/>
            <person name="Abt B."/>
            <person name="Goker M."/>
            <person name="Rohde M."/>
            <person name="Glavina Del Rio T."/>
            <person name="Tice H."/>
            <person name="Copeland A."/>
            <person name="Cheng J.F."/>
            <person name="Lucas S."/>
            <person name="Chen F."/>
            <person name="Nolan M."/>
            <person name="Bruce D."/>
            <person name="Goodwin L."/>
            <person name="Pitluck S."/>
            <person name="Ivanova N."/>
            <person name="Mavromatis K."/>
            <person name="Ovchinnikova G."/>
            <person name="Pati A."/>
            <person name="Chen A."/>
            <person name="Palaniappan K."/>
            <person name="Hauser L."/>
            <person name="Chang Y.J."/>
            <person name="Jefferies C.C."/>
            <person name="Saunders E."/>
            <person name="Brettin T."/>
            <person name="Detter J.C."/>
            <person name="Han C."/>
            <person name="Chain P."/>
            <person name="Bristow J."/>
            <person name="Eisen J.A."/>
            <person name="Markowitz V."/>
            <person name="Hugenholtz P."/>
            <person name="Kyrpides N.C."/>
            <person name="Klenk H.P."/>
            <person name="Lapidus A."/>
        </authorList>
    </citation>
    <scope>NUCLEOTIDE SEQUENCE [LARGE SCALE GENOMIC DNA]</scope>
    <source>
        <strain>ATCC BAA-8 / DSM 12333 / CCUG 43141 / JCM 11478 / NBRC 16432 / NCIMB 13614 / HKI 0122</strain>
    </source>
</reference>
<protein>
    <recommendedName>
        <fullName evidence="1">Small ribosomal subunit protein uS15</fullName>
    </recommendedName>
    <alternativeName>
        <fullName evidence="2">30S ribosomal protein S15</fullName>
    </alternativeName>
</protein>
<name>RS15_BEUC1</name>
<organism>
    <name type="scientific">Beutenbergia cavernae (strain ATCC BAA-8 / DSM 12333 / CCUG 43141 / JCM 11478 / NBRC 16432 / NCIMB 13614 / HKI 0122)</name>
    <dbReference type="NCBI Taxonomy" id="471853"/>
    <lineage>
        <taxon>Bacteria</taxon>
        <taxon>Bacillati</taxon>
        <taxon>Actinomycetota</taxon>
        <taxon>Actinomycetes</taxon>
        <taxon>Micrococcales</taxon>
        <taxon>Beutenbergiaceae</taxon>
        <taxon>Beutenbergia</taxon>
    </lineage>
</organism>
<gene>
    <name evidence="1" type="primary">rpsO</name>
    <name type="ordered locus">Bcav_2479</name>
</gene>